<dbReference type="EC" id="6.1.1.16" evidence="1"/>
<dbReference type="EMBL" id="CP000036">
    <property type="protein sequence ID" value="ABB65125.1"/>
    <property type="molecule type" value="Genomic_DNA"/>
</dbReference>
<dbReference type="SMR" id="Q324Y3"/>
<dbReference type="KEGG" id="sbo:SBO_0417"/>
<dbReference type="HOGENOM" id="CLU_013528_0_1_6"/>
<dbReference type="Proteomes" id="UP000007067">
    <property type="component" value="Chromosome"/>
</dbReference>
<dbReference type="GO" id="GO:0005829">
    <property type="term" value="C:cytosol"/>
    <property type="evidence" value="ECO:0007669"/>
    <property type="project" value="TreeGrafter"/>
</dbReference>
<dbReference type="GO" id="GO:0005524">
    <property type="term" value="F:ATP binding"/>
    <property type="evidence" value="ECO:0007669"/>
    <property type="project" value="UniProtKB-UniRule"/>
</dbReference>
<dbReference type="GO" id="GO:0004817">
    <property type="term" value="F:cysteine-tRNA ligase activity"/>
    <property type="evidence" value="ECO:0007669"/>
    <property type="project" value="UniProtKB-UniRule"/>
</dbReference>
<dbReference type="GO" id="GO:0008270">
    <property type="term" value="F:zinc ion binding"/>
    <property type="evidence" value="ECO:0007669"/>
    <property type="project" value="UniProtKB-UniRule"/>
</dbReference>
<dbReference type="GO" id="GO:0006423">
    <property type="term" value="P:cysteinyl-tRNA aminoacylation"/>
    <property type="evidence" value="ECO:0007669"/>
    <property type="project" value="UniProtKB-UniRule"/>
</dbReference>
<dbReference type="CDD" id="cd07963">
    <property type="entry name" value="Anticodon_Ia_Cys"/>
    <property type="match status" value="1"/>
</dbReference>
<dbReference type="CDD" id="cd00672">
    <property type="entry name" value="CysRS_core"/>
    <property type="match status" value="1"/>
</dbReference>
<dbReference type="FunFam" id="1.20.120.1910:FF:000001">
    <property type="entry name" value="Cysteine--tRNA ligase"/>
    <property type="match status" value="1"/>
</dbReference>
<dbReference type="FunFam" id="3.40.50.620:FF:000009">
    <property type="entry name" value="Cysteine--tRNA ligase"/>
    <property type="match status" value="1"/>
</dbReference>
<dbReference type="Gene3D" id="1.20.120.1910">
    <property type="entry name" value="Cysteine-tRNA ligase, C-terminal anti-codon recognition domain"/>
    <property type="match status" value="1"/>
</dbReference>
<dbReference type="Gene3D" id="3.40.50.620">
    <property type="entry name" value="HUPs"/>
    <property type="match status" value="1"/>
</dbReference>
<dbReference type="HAMAP" id="MF_00041">
    <property type="entry name" value="Cys_tRNA_synth"/>
    <property type="match status" value="1"/>
</dbReference>
<dbReference type="InterPro" id="IPR015803">
    <property type="entry name" value="Cys-tRNA-ligase"/>
</dbReference>
<dbReference type="InterPro" id="IPR015273">
    <property type="entry name" value="Cys-tRNA-synt_Ia_DALR"/>
</dbReference>
<dbReference type="InterPro" id="IPR024909">
    <property type="entry name" value="Cys-tRNA/MSH_ligase"/>
</dbReference>
<dbReference type="InterPro" id="IPR014729">
    <property type="entry name" value="Rossmann-like_a/b/a_fold"/>
</dbReference>
<dbReference type="InterPro" id="IPR032678">
    <property type="entry name" value="tRNA-synt_1_cat_dom"/>
</dbReference>
<dbReference type="InterPro" id="IPR009080">
    <property type="entry name" value="tRNAsynth_Ia_anticodon-bd"/>
</dbReference>
<dbReference type="NCBIfam" id="TIGR00435">
    <property type="entry name" value="cysS"/>
    <property type="match status" value="1"/>
</dbReference>
<dbReference type="PANTHER" id="PTHR10890:SF3">
    <property type="entry name" value="CYSTEINE--TRNA LIGASE, CYTOPLASMIC"/>
    <property type="match status" value="1"/>
</dbReference>
<dbReference type="PANTHER" id="PTHR10890">
    <property type="entry name" value="CYSTEINYL-TRNA SYNTHETASE"/>
    <property type="match status" value="1"/>
</dbReference>
<dbReference type="Pfam" id="PF09190">
    <property type="entry name" value="DALR_2"/>
    <property type="match status" value="1"/>
</dbReference>
<dbReference type="Pfam" id="PF01406">
    <property type="entry name" value="tRNA-synt_1e"/>
    <property type="match status" value="1"/>
</dbReference>
<dbReference type="PRINTS" id="PR00983">
    <property type="entry name" value="TRNASYNTHCYS"/>
</dbReference>
<dbReference type="SMART" id="SM00840">
    <property type="entry name" value="DALR_2"/>
    <property type="match status" value="1"/>
</dbReference>
<dbReference type="SUPFAM" id="SSF47323">
    <property type="entry name" value="Anticodon-binding domain of a subclass of class I aminoacyl-tRNA synthetases"/>
    <property type="match status" value="1"/>
</dbReference>
<dbReference type="SUPFAM" id="SSF52374">
    <property type="entry name" value="Nucleotidylyl transferase"/>
    <property type="match status" value="1"/>
</dbReference>
<proteinExistence type="inferred from homology"/>
<protein>
    <recommendedName>
        <fullName evidence="1">Cysteine--tRNA ligase</fullName>
        <ecNumber evidence="1">6.1.1.16</ecNumber>
    </recommendedName>
    <alternativeName>
        <fullName evidence="1">Cysteinyl-tRNA synthetase</fullName>
        <shortName evidence="1">CysRS</shortName>
    </alternativeName>
</protein>
<accession>Q324Y3</accession>
<comment type="catalytic activity">
    <reaction evidence="1">
        <text>tRNA(Cys) + L-cysteine + ATP = L-cysteinyl-tRNA(Cys) + AMP + diphosphate</text>
        <dbReference type="Rhea" id="RHEA:17773"/>
        <dbReference type="Rhea" id="RHEA-COMP:9661"/>
        <dbReference type="Rhea" id="RHEA-COMP:9679"/>
        <dbReference type="ChEBI" id="CHEBI:30616"/>
        <dbReference type="ChEBI" id="CHEBI:33019"/>
        <dbReference type="ChEBI" id="CHEBI:35235"/>
        <dbReference type="ChEBI" id="CHEBI:78442"/>
        <dbReference type="ChEBI" id="CHEBI:78517"/>
        <dbReference type="ChEBI" id="CHEBI:456215"/>
        <dbReference type="EC" id="6.1.1.16"/>
    </reaction>
</comment>
<comment type="cofactor">
    <cofactor evidence="1">
        <name>Zn(2+)</name>
        <dbReference type="ChEBI" id="CHEBI:29105"/>
    </cofactor>
    <text evidence="1">Binds 1 zinc ion per subunit.</text>
</comment>
<comment type="subunit">
    <text evidence="1">Monomer.</text>
</comment>
<comment type="subcellular location">
    <subcellularLocation>
        <location evidence="1">Cytoplasm</location>
    </subcellularLocation>
</comment>
<comment type="similarity">
    <text evidence="1">Belongs to the class-I aminoacyl-tRNA synthetase family.</text>
</comment>
<organism>
    <name type="scientific">Shigella boydii serotype 4 (strain Sb227)</name>
    <dbReference type="NCBI Taxonomy" id="300268"/>
    <lineage>
        <taxon>Bacteria</taxon>
        <taxon>Pseudomonadati</taxon>
        <taxon>Pseudomonadota</taxon>
        <taxon>Gammaproteobacteria</taxon>
        <taxon>Enterobacterales</taxon>
        <taxon>Enterobacteriaceae</taxon>
        <taxon>Shigella</taxon>
    </lineage>
</organism>
<evidence type="ECO:0000255" key="1">
    <source>
        <dbReference type="HAMAP-Rule" id="MF_00041"/>
    </source>
</evidence>
<gene>
    <name evidence="1" type="primary">cysS</name>
    <name type="ordered locus">SBO_0417</name>
</gene>
<sequence>MLKIFNTLTRQKEEFKPIHAGEVGMYVCGITVYDLCHIGHGRTFVAFDVVARYLRFLGYKLKYVRNITDIDDKIIKRANENGESFVALVDRMIAEMHKDFDALNILRPDMEPRATHHIAEIIELTEQLIAKGHAYVADNGDVMFDVPTDPTYGVLSRQDLDQLQAGARVDVVDDKRNPMDFVLWKMSKEGEPSWPSPWGAGRPGWHIECSAMNCKQLGNHFDIHGGGSDLMFPHHENEIAQSTCAHDGQYVNYWMHSGMVMVDREKMSKSLGNFFTVRDVLKYYDAETVRYFLMSGHYRSQLNYSEENLKQTRAALERLYTALRGTDKTVAPAGGEAFEARFIEAMDDDFNTPEAYSVLFDMAREVNRLKAEDMAAANAMASHLRKLSAVLGLLEQEPEAFLQSGAQADDSEVAEIEALIQQRLDARKAKDWAGGRCGT</sequence>
<keyword id="KW-0030">Aminoacyl-tRNA synthetase</keyword>
<keyword id="KW-0067">ATP-binding</keyword>
<keyword id="KW-0963">Cytoplasm</keyword>
<keyword id="KW-0436">Ligase</keyword>
<keyword id="KW-0479">Metal-binding</keyword>
<keyword id="KW-0547">Nucleotide-binding</keyword>
<keyword id="KW-0648">Protein biosynthesis</keyword>
<keyword id="KW-0862">Zinc</keyword>
<name>SYC_SHIBS</name>
<reference key="1">
    <citation type="journal article" date="2005" name="Nucleic Acids Res.">
        <title>Genome dynamics and diversity of Shigella species, the etiologic agents of bacillary dysentery.</title>
        <authorList>
            <person name="Yang F."/>
            <person name="Yang J."/>
            <person name="Zhang X."/>
            <person name="Chen L."/>
            <person name="Jiang Y."/>
            <person name="Yan Y."/>
            <person name="Tang X."/>
            <person name="Wang J."/>
            <person name="Xiong Z."/>
            <person name="Dong J."/>
            <person name="Xue Y."/>
            <person name="Zhu Y."/>
            <person name="Xu X."/>
            <person name="Sun L."/>
            <person name="Chen S."/>
            <person name="Nie H."/>
            <person name="Peng J."/>
            <person name="Xu J."/>
            <person name="Wang Y."/>
            <person name="Yuan Z."/>
            <person name="Wen Y."/>
            <person name="Yao Z."/>
            <person name="Shen Y."/>
            <person name="Qiang B."/>
            <person name="Hou Y."/>
            <person name="Yu J."/>
            <person name="Jin Q."/>
        </authorList>
    </citation>
    <scope>NUCLEOTIDE SEQUENCE [LARGE SCALE GENOMIC DNA]</scope>
    <source>
        <strain>Sb227</strain>
    </source>
</reference>
<feature type="chain" id="PRO_0000240954" description="Cysteine--tRNA ligase">
    <location>
        <begin position="1"/>
        <end position="439"/>
    </location>
</feature>
<feature type="short sequence motif" description="'HIGH' region">
    <location>
        <begin position="30"/>
        <end position="40"/>
    </location>
</feature>
<feature type="short sequence motif" description="'KMSKS' region">
    <location>
        <begin position="266"/>
        <end position="270"/>
    </location>
</feature>
<feature type="binding site" evidence="1">
    <location>
        <position position="28"/>
    </location>
    <ligand>
        <name>Zn(2+)</name>
        <dbReference type="ChEBI" id="CHEBI:29105"/>
    </ligand>
</feature>
<feature type="binding site" evidence="1">
    <location>
        <position position="209"/>
    </location>
    <ligand>
        <name>Zn(2+)</name>
        <dbReference type="ChEBI" id="CHEBI:29105"/>
    </ligand>
</feature>
<feature type="binding site" evidence="1">
    <location>
        <position position="234"/>
    </location>
    <ligand>
        <name>Zn(2+)</name>
        <dbReference type="ChEBI" id="CHEBI:29105"/>
    </ligand>
</feature>
<feature type="binding site" evidence="1">
    <location>
        <position position="238"/>
    </location>
    <ligand>
        <name>Zn(2+)</name>
        <dbReference type="ChEBI" id="CHEBI:29105"/>
    </ligand>
</feature>
<feature type="binding site" evidence="1">
    <location>
        <position position="269"/>
    </location>
    <ligand>
        <name>ATP</name>
        <dbReference type="ChEBI" id="CHEBI:30616"/>
    </ligand>
</feature>